<dbReference type="EC" id="3.4.24.-" evidence="1"/>
<dbReference type="EMBL" id="AP006841">
    <property type="protein sequence ID" value="BAD48637.1"/>
    <property type="molecule type" value="Genomic_DNA"/>
</dbReference>
<dbReference type="RefSeq" id="WP_005786940.1">
    <property type="nucleotide sequence ID" value="NC_006347.1"/>
</dbReference>
<dbReference type="RefSeq" id="YP_099171.1">
    <property type="nucleotide sequence ID" value="NC_006347.1"/>
</dbReference>
<dbReference type="STRING" id="295405.BF1889"/>
<dbReference type="KEGG" id="bfr:BF1889"/>
<dbReference type="PATRIC" id="fig|295405.11.peg.1839"/>
<dbReference type="HOGENOM" id="CLU_042266_2_0_10"/>
<dbReference type="OrthoDB" id="9810445at2"/>
<dbReference type="Proteomes" id="UP000002197">
    <property type="component" value="Chromosome"/>
</dbReference>
<dbReference type="GO" id="GO:0005886">
    <property type="term" value="C:plasma membrane"/>
    <property type="evidence" value="ECO:0007669"/>
    <property type="project" value="UniProtKB-SubCell"/>
</dbReference>
<dbReference type="GO" id="GO:0004222">
    <property type="term" value="F:metalloendopeptidase activity"/>
    <property type="evidence" value="ECO:0007669"/>
    <property type="project" value="UniProtKB-UniRule"/>
</dbReference>
<dbReference type="GO" id="GO:0008270">
    <property type="term" value="F:zinc ion binding"/>
    <property type="evidence" value="ECO:0007669"/>
    <property type="project" value="UniProtKB-UniRule"/>
</dbReference>
<dbReference type="GO" id="GO:0006508">
    <property type="term" value="P:proteolysis"/>
    <property type="evidence" value="ECO:0007669"/>
    <property type="project" value="UniProtKB-KW"/>
</dbReference>
<dbReference type="CDD" id="cd07340">
    <property type="entry name" value="M48B_Htpx_like"/>
    <property type="match status" value="1"/>
</dbReference>
<dbReference type="Gene3D" id="3.30.2010.10">
    <property type="entry name" value="Metalloproteases ('zincins'), catalytic domain"/>
    <property type="match status" value="1"/>
</dbReference>
<dbReference type="HAMAP" id="MF_00188">
    <property type="entry name" value="Pept_M48_protease_HtpX"/>
    <property type="match status" value="1"/>
</dbReference>
<dbReference type="InterPro" id="IPR050083">
    <property type="entry name" value="HtpX_protease"/>
</dbReference>
<dbReference type="InterPro" id="IPR022919">
    <property type="entry name" value="Pept_M48_protease_HtpX"/>
</dbReference>
<dbReference type="InterPro" id="IPR001915">
    <property type="entry name" value="Peptidase_M48"/>
</dbReference>
<dbReference type="PANTHER" id="PTHR43221">
    <property type="entry name" value="PROTEASE HTPX"/>
    <property type="match status" value="1"/>
</dbReference>
<dbReference type="PANTHER" id="PTHR43221:SF2">
    <property type="entry name" value="PROTEASE HTPX HOMOLOG"/>
    <property type="match status" value="1"/>
</dbReference>
<dbReference type="Pfam" id="PF01435">
    <property type="entry name" value="Peptidase_M48"/>
    <property type="match status" value="1"/>
</dbReference>
<proteinExistence type="inferred from homology"/>
<evidence type="ECO:0000255" key="1">
    <source>
        <dbReference type="HAMAP-Rule" id="MF_00188"/>
    </source>
</evidence>
<protein>
    <recommendedName>
        <fullName evidence="1">Protease HtpX homolog</fullName>
        <ecNumber evidence="1">3.4.24.-</ecNumber>
    </recommendedName>
</protein>
<keyword id="KW-0997">Cell inner membrane</keyword>
<keyword id="KW-1003">Cell membrane</keyword>
<keyword id="KW-0378">Hydrolase</keyword>
<keyword id="KW-0472">Membrane</keyword>
<keyword id="KW-0479">Metal-binding</keyword>
<keyword id="KW-0482">Metalloprotease</keyword>
<keyword id="KW-0645">Protease</keyword>
<keyword id="KW-0812">Transmembrane</keyword>
<keyword id="KW-1133">Transmembrane helix</keyword>
<keyword id="KW-0862">Zinc</keyword>
<accession>Q64V41</accession>
<feature type="chain" id="PRO_1000192736" description="Protease HtpX homolog">
    <location>
        <begin position="1"/>
        <end position="322"/>
    </location>
</feature>
<feature type="transmembrane region" description="Helical" evidence="1">
    <location>
        <begin position="19"/>
        <end position="39"/>
    </location>
</feature>
<feature type="transmembrane region" description="Helical" evidence="1">
    <location>
        <begin position="61"/>
        <end position="81"/>
    </location>
</feature>
<feature type="transmembrane region" description="Helical" evidence="1">
    <location>
        <begin position="175"/>
        <end position="195"/>
    </location>
</feature>
<feature type="transmembrane region" description="Helical" evidence="1">
    <location>
        <begin position="216"/>
        <end position="236"/>
    </location>
</feature>
<feature type="active site" evidence="1">
    <location>
        <position position="166"/>
    </location>
</feature>
<feature type="binding site" evidence="1">
    <location>
        <position position="165"/>
    </location>
    <ligand>
        <name>Zn(2+)</name>
        <dbReference type="ChEBI" id="CHEBI:29105"/>
        <note>catalytic</note>
    </ligand>
</feature>
<feature type="binding site" evidence="1">
    <location>
        <position position="169"/>
    </location>
    <ligand>
        <name>Zn(2+)</name>
        <dbReference type="ChEBI" id="CHEBI:29105"/>
        <note>catalytic</note>
    </ligand>
</feature>
<feature type="binding site" evidence="1">
    <location>
        <position position="245"/>
    </location>
    <ligand>
        <name>Zn(2+)</name>
        <dbReference type="ChEBI" id="CHEBI:29105"/>
        <note>catalytic</note>
    </ligand>
</feature>
<sequence>MQYVGIQTQQSRNNLRSGILLILFPCLVAVLTYLFCYLLITFTVEDDYGQYNTLAMTNQMFINLIPYIIGGVLVWFIIAYFTNSSIIKAATGARPLERKENKRIYNLVENLCMSQGMKMPKINIIDDDSLNAYASGINEQTYTITLSKGIIEKLNDEELEGVIAHELTHIRNHDVRLLIISIVFVGIFSMLAQIALRSVYYSSWTRSRNDKNNGAILILVLAMIVAAIGYFFATLMRFAISRKREYMADAGAAEMTKNPLALASALRKISADPDIEAVEREDVAQLFIQHPGKQAKSALSGLSGLFATHPPIEKRIAILEQF</sequence>
<organism>
    <name type="scientific">Bacteroides fragilis (strain YCH46)</name>
    <dbReference type="NCBI Taxonomy" id="295405"/>
    <lineage>
        <taxon>Bacteria</taxon>
        <taxon>Pseudomonadati</taxon>
        <taxon>Bacteroidota</taxon>
        <taxon>Bacteroidia</taxon>
        <taxon>Bacteroidales</taxon>
        <taxon>Bacteroidaceae</taxon>
        <taxon>Bacteroides</taxon>
    </lineage>
</organism>
<gene>
    <name evidence="1" type="primary">htpX</name>
    <name type="ordered locus">BF1889</name>
</gene>
<reference key="1">
    <citation type="journal article" date="2004" name="Proc. Natl. Acad. Sci. U.S.A.">
        <title>Genomic analysis of Bacteroides fragilis reveals extensive DNA inversions regulating cell surface adaptation.</title>
        <authorList>
            <person name="Kuwahara T."/>
            <person name="Yamashita A."/>
            <person name="Hirakawa H."/>
            <person name="Nakayama H."/>
            <person name="Toh H."/>
            <person name="Okada N."/>
            <person name="Kuhara S."/>
            <person name="Hattori M."/>
            <person name="Hayashi T."/>
            <person name="Ohnishi Y."/>
        </authorList>
    </citation>
    <scope>NUCLEOTIDE SEQUENCE [LARGE SCALE GENOMIC DNA]</scope>
    <source>
        <strain>YCH46</strain>
    </source>
</reference>
<name>HTPX_BACFR</name>
<comment type="cofactor">
    <cofactor evidence="1">
        <name>Zn(2+)</name>
        <dbReference type="ChEBI" id="CHEBI:29105"/>
    </cofactor>
    <text evidence="1">Binds 1 zinc ion per subunit.</text>
</comment>
<comment type="subcellular location">
    <subcellularLocation>
        <location evidence="1">Cell inner membrane</location>
        <topology evidence="1">Multi-pass membrane protein</topology>
    </subcellularLocation>
</comment>
<comment type="similarity">
    <text evidence="1">Belongs to the peptidase M48B family.</text>
</comment>